<name>RKM5_VANPO</name>
<proteinExistence type="inferred from homology"/>
<comment type="function">
    <text evidence="1">S-adenosyl-L-methionine-dependent protein-lysine N-methyltransferase that methylates 60S ribosomal protein L1.</text>
</comment>
<comment type="similarity">
    <text evidence="3">Belongs to the class I-like SAM-binding methyltransferase superfamily. RKM5 family.</text>
</comment>
<comment type="sequence caution" evidence="3">
    <conflict type="erroneous initiation">
        <sequence resource="EMBL-CDS" id="EDO14306"/>
    </conflict>
    <text>Extended N-terminus.</text>
</comment>
<keyword id="KW-0489">Methyltransferase</keyword>
<keyword id="KW-1185">Reference proteome</keyword>
<keyword id="KW-0949">S-adenosyl-L-methionine</keyword>
<keyword id="KW-0808">Transferase</keyword>
<protein>
    <recommendedName>
        <fullName evidence="1">Ribosomal lysine N-methyltransferase 5</fullName>
        <ecNumber evidence="1">2.1.1.-</ecNumber>
    </recommendedName>
</protein>
<dbReference type="EC" id="2.1.1.-" evidence="1"/>
<dbReference type="EMBL" id="DS480632">
    <property type="protein sequence ID" value="EDO14306.1"/>
    <property type="status" value="ALT_INIT"/>
    <property type="molecule type" value="Genomic_DNA"/>
</dbReference>
<dbReference type="RefSeq" id="XP_001642164.1">
    <property type="nucleotide sequence ID" value="XM_001642114.1"/>
</dbReference>
<dbReference type="FunCoup" id="A7TTV0">
    <property type="interactions" value="18"/>
</dbReference>
<dbReference type="STRING" id="436907.A7TTV0"/>
<dbReference type="GeneID" id="5542277"/>
<dbReference type="KEGG" id="vpo:Kpol_152p1"/>
<dbReference type="eggNOG" id="KOG1018">
    <property type="taxonomic scope" value="Eukaryota"/>
</dbReference>
<dbReference type="HOGENOM" id="CLU_051532_0_0_1"/>
<dbReference type="InParanoid" id="A7TTV0"/>
<dbReference type="OrthoDB" id="2529286at2759"/>
<dbReference type="Proteomes" id="UP000000267">
    <property type="component" value="Unassembled WGS sequence"/>
</dbReference>
<dbReference type="GO" id="GO:0005829">
    <property type="term" value="C:cytosol"/>
    <property type="evidence" value="ECO:0007669"/>
    <property type="project" value="TreeGrafter"/>
</dbReference>
<dbReference type="GO" id="GO:0032991">
    <property type="term" value="C:protein-containing complex"/>
    <property type="evidence" value="ECO:0007669"/>
    <property type="project" value="TreeGrafter"/>
</dbReference>
<dbReference type="GO" id="GO:0008757">
    <property type="term" value="F:S-adenosylmethionine-dependent methyltransferase activity"/>
    <property type="evidence" value="ECO:0007669"/>
    <property type="project" value="UniProtKB-ARBA"/>
</dbReference>
<dbReference type="GO" id="GO:0032259">
    <property type="term" value="P:methylation"/>
    <property type="evidence" value="ECO:0007669"/>
    <property type="project" value="UniProtKB-KW"/>
</dbReference>
<dbReference type="Gene3D" id="3.40.50.150">
    <property type="entry name" value="Vaccinia Virus protein VP39"/>
    <property type="match status" value="1"/>
</dbReference>
<dbReference type="InterPro" id="IPR019410">
    <property type="entry name" value="Methyltransf_16"/>
</dbReference>
<dbReference type="InterPro" id="IPR029063">
    <property type="entry name" value="SAM-dependent_MTases_sf"/>
</dbReference>
<dbReference type="PANTHER" id="PTHR14614">
    <property type="entry name" value="HEPATOCELLULAR CARCINOMA-ASSOCIATED ANTIGEN"/>
    <property type="match status" value="1"/>
</dbReference>
<dbReference type="PANTHER" id="PTHR14614:SF109">
    <property type="entry name" value="RIBOSOMAL LYSINE N-METHYLTRANSFERASE 5"/>
    <property type="match status" value="1"/>
</dbReference>
<feature type="chain" id="PRO_0000411044" description="Ribosomal lysine N-methyltransferase 5">
    <location>
        <begin position="1"/>
        <end position="324"/>
    </location>
</feature>
<feature type="binding site" evidence="2">
    <location>
        <position position="90"/>
    </location>
    <ligand>
        <name>S-adenosyl-L-methionine</name>
        <dbReference type="ChEBI" id="CHEBI:59789"/>
    </ligand>
</feature>
<feature type="binding site" evidence="2">
    <location>
        <begin position="140"/>
        <end position="142"/>
    </location>
    <ligand>
        <name>S-adenosyl-L-methionine</name>
        <dbReference type="ChEBI" id="CHEBI:59789"/>
    </ligand>
</feature>
<feature type="binding site" evidence="2">
    <location>
        <position position="162"/>
    </location>
    <ligand>
        <name>S-adenosyl-L-methionine</name>
        <dbReference type="ChEBI" id="CHEBI:59789"/>
    </ligand>
</feature>
<feature type="binding site" evidence="2">
    <location>
        <position position="217"/>
    </location>
    <ligand>
        <name>S-adenosyl-L-methionine</name>
        <dbReference type="ChEBI" id="CHEBI:59789"/>
    </ligand>
</feature>
<feature type="binding site" evidence="2">
    <location>
        <position position="247"/>
    </location>
    <ligand>
        <name>S-adenosyl-L-methionine</name>
        <dbReference type="ChEBI" id="CHEBI:59789"/>
    </ligand>
</feature>
<accession>A7TTV0</accession>
<evidence type="ECO:0000250" key="1">
    <source>
        <dbReference type="UniProtKB" id="Q12367"/>
    </source>
</evidence>
<evidence type="ECO:0000250" key="2">
    <source>
        <dbReference type="UniProtKB" id="Q9H867"/>
    </source>
</evidence>
<evidence type="ECO:0000305" key="3"/>
<organism>
    <name type="scientific">Vanderwaltozyma polyspora (strain ATCC 22028 / DSM 70294 / BCRC 21397 / CBS 2163 / NBRC 10782 / NRRL Y-8283 / UCD 57-17)</name>
    <name type="common">Kluyveromyces polysporus</name>
    <dbReference type="NCBI Taxonomy" id="436907"/>
    <lineage>
        <taxon>Eukaryota</taxon>
        <taxon>Fungi</taxon>
        <taxon>Dikarya</taxon>
        <taxon>Ascomycota</taxon>
        <taxon>Saccharomycotina</taxon>
        <taxon>Saccharomycetes</taxon>
        <taxon>Saccharomycetales</taxon>
        <taxon>Saccharomycetaceae</taxon>
        <taxon>Vanderwaltozyma</taxon>
    </lineage>
</organism>
<sequence length="324" mass="36820">MSGLLQLDEESLYDHIFERYTLLTSNNDSLKQDLGIVDRTVSKITIDIDQFDFNNKKSNNDFYSIEINQPITSLNSSSVNNNSTTGYVVWSTTPFFTRWLIFHSNASIFRNGGSIELIDQDDELKLPPMFSNSVGLLELGSGIAGILPVTLGNFVGSFIATDQIGILSTLKTNILENLSQLNRKIVTSRSLNLNLDVDESTLLKRSLLSLECLPLDWELFDIKDTTKLDPALLSLFKEKETIYVLAMDVIYNEYLIESFLSTIQNLKSLAFKFNVNLNCLIGIQLRSEEVTTLFLEKAIIDYEMKVYYIQDNILESSRFSIYMI</sequence>
<reference key="1">
    <citation type="journal article" date="2007" name="Proc. Natl. Acad. Sci. U.S.A.">
        <title>Independent sorting-out of thousands of duplicated gene pairs in two yeast species descended from a whole-genome duplication.</title>
        <authorList>
            <person name="Scannell D.R."/>
            <person name="Frank A.C."/>
            <person name="Conant G.C."/>
            <person name="Byrne K.P."/>
            <person name="Woolfit M."/>
            <person name="Wolfe K.H."/>
        </authorList>
    </citation>
    <scope>NUCLEOTIDE SEQUENCE [LARGE SCALE GENOMIC DNA]</scope>
    <source>
        <strain>ATCC 22028 / DSM 70294 / BCRC 21397 / CBS 2163 / NBRC 10782 / NRRL Y-8283 / UCD 57-17</strain>
    </source>
</reference>
<gene>
    <name type="primary">RKM5</name>
    <name type="ORF">Kpol_152p1</name>
</gene>